<proteinExistence type="evidence at protein level"/>
<evidence type="ECO:0000250" key="1"/>
<evidence type="ECO:0000255" key="2">
    <source>
        <dbReference type="PROSITE-ProRule" id="PRU00303"/>
    </source>
</evidence>
<evidence type="ECO:0007829" key="3">
    <source>
        <dbReference type="PDB" id="3ZH7"/>
    </source>
</evidence>
<sequence length="160" mass="18360">MKKIILTLSLGLLTACSAQIQKAEQNDVKLAPPTDVRSGYIRLVKNVNYYIDSESIWVDNQEPQIVHFDAVVNLDRGLYVYPEPKRYARSVRQYKILNCANYHLTQIRTDFYDEFWGQGLRAAPKKQKKHTLSLTPDTTLYNAAQIICANYGKAFSVDKK</sequence>
<dbReference type="EMBL" id="L42023">
    <property type="protein sequence ID" value="AAC21855.1"/>
    <property type="molecule type" value="Genomic_DNA"/>
</dbReference>
<dbReference type="PIR" id="F64003">
    <property type="entry name" value="F64003"/>
</dbReference>
<dbReference type="RefSeq" id="NP_438346.1">
    <property type="nucleotide sequence ID" value="NC_000907.1"/>
</dbReference>
<dbReference type="PDB" id="3ZH7">
    <property type="method" value="X-ray"/>
    <property type="resolution" value="2.10 A"/>
    <property type="chains" value="A=28-153"/>
</dbReference>
<dbReference type="PDBsum" id="3ZH7"/>
<dbReference type="SMR" id="P43961"/>
<dbReference type="STRING" id="71421.HI_0178"/>
<dbReference type="EnsemblBacteria" id="AAC21855">
    <property type="protein sequence ID" value="AAC21855"/>
    <property type="gene ID" value="HI_0178"/>
</dbReference>
<dbReference type="KEGG" id="hin:HI_0178"/>
<dbReference type="PATRIC" id="fig|71421.8.peg.182"/>
<dbReference type="eggNOG" id="ENOG5031K7A">
    <property type="taxonomic scope" value="Bacteria"/>
</dbReference>
<dbReference type="HOGENOM" id="CLU_144598_0_0_6"/>
<dbReference type="OrthoDB" id="5690556at2"/>
<dbReference type="BioCyc" id="HINF71421:G1GJ1-188-MONOMER"/>
<dbReference type="Proteomes" id="UP000000579">
    <property type="component" value="Chromosome"/>
</dbReference>
<dbReference type="GO" id="GO:0009279">
    <property type="term" value="C:cell outer membrane"/>
    <property type="evidence" value="ECO:0007669"/>
    <property type="project" value="UniProtKB-SubCell"/>
</dbReference>
<dbReference type="GO" id="GO:0009986">
    <property type="term" value="C:cell surface"/>
    <property type="evidence" value="ECO:0007669"/>
    <property type="project" value="UniProtKB-SubCell"/>
</dbReference>
<dbReference type="Gene3D" id="2.40.128.710">
    <property type="entry name" value="Surface-adhesin protein E"/>
    <property type="match status" value="1"/>
</dbReference>
<dbReference type="InterPro" id="IPR043088">
    <property type="entry name" value="Adhesin_E"/>
</dbReference>
<dbReference type="InterPro" id="IPR031939">
    <property type="entry name" value="Adhesin_E-like"/>
</dbReference>
<dbReference type="InterPro" id="IPR016595">
    <property type="entry name" value="Adhesin_E_Pasteurellaceae"/>
</dbReference>
<dbReference type="Pfam" id="PF16747">
    <property type="entry name" value="Adhesin_E"/>
    <property type="match status" value="1"/>
</dbReference>
<dbReference type="PIRSF" id="PIRSF012320">
    <property type="entry name" value="Prplsmic_HI0178_prd"/>
    <property type="match status" value="1"/>
</dbReference>
<dbReference type="PROSITE" id="PS51257">
    <property type="entry name" value="PROKAR_LIPOPROTEIN"/>
    <property type="match status" value="1"/>
</dbReference>
<organism>
    <name type="scientific">Haemophilus influenzae (strain ATCC 51907 / DSM 11121 / KW20 / Rd)</name>
    <dbReference type="NCBI Taxonomy" id="71421"/>
    <lineage>
        <taxon>Bacteria</taxon>
        <taxon>Pseudomonadati</taxon>
        <taxon>Pseudomonadota</taxon>
        <taxon>Gammaproteobacteria</taxon>
        <taxon>Pasteurellales</taxon>
        <taxon>Pasteurellaceae</taxon>
        <taxon>Haemophilus</taxon>
    </lineage>
</organism>
<reference key="1">
    <citation type="journal article" date="1995" name="Science">
        <title>Whole-genome random sequencing and assembly of Haemophilus influenzae Rd.</title>
        <authorList>
            <person name="Fleischmann R.D."/>
            <person name="Adams M.D."/>
            <person name="White O."/>
            <person name="Clayton R.A."/>
            <person name="Kirkness E.F."/>
            <person name="Kerlavage A.R."/>
            <person name="Bult C.J."/>
            <person name="Tomb J.-F."/>
            <person name="Dougherty B.A."/>
            <person name="Merrick J.M."/>
            <person name="McKenney K."/>
            <person name="Sutton G.G."/>
            <person name="FitzHugh W."/>
            <person name="Fields C.A."/>
            <person name="Gocayne J.D."/>
            <person name="Scott J.D."/>
            <person name="Shirley R."/>
            <person name="Liu L.-I."/>
            <person name="Glodek A."/>
            <person name="Kelley J.M."/>
            <person name="Weidman J.F."/>
            <person name="Phillips C.A."/>
            <person name="Spriggs T."/>
            <person name="Hedblom E."/>
            <person name="Cotton M.D."/>
            <person name="Utterback T.R."/>
            <person name="Hanna M.C."/>
            <person name="Nguyen D.T."/>
            <person name="Saudek D.M."/>
            <person name="Brandon R.C."/>
            <person name="Fine L.D."/>
            <person name="Fritchman J.L."/>
            <person name="Fuhrmann J.L."/>
            <person name="Geoghagen N.S.M."/>
            <person name="Gnehm C.L."/>
            <person name="McDonald L.A."/>
            <person name="Small K.V."/>
            <person name="Fraser C.M."/>
            <person name="Smith H.O."/>
            <person name="Venter J.C."/>
        </authorList>
    </citation>
    <scope>NUCLEOTIDE SEQUENCE [LARGE SCALE GENOMIC DNA]</scope>
    <source>
        <strain>ATCC 51907 / DSM 11121 / KW20 / Rd</strain>
    </source>
</reference>
<gene>
    <name type="primary">pe</name>
    <name type="ordered locus">HI_0178</name>
</gene>
<feature type="signal peptide" evidence="2">
    <location>
        <begin position="1"/>
        <end position="15"/>
    </location>
</feature>
<feature type="chain" id="PRO_0000013953" description="Surface-adhesin protein E">
    <location>
        <begin position="16"/>
        <end position="160"/>
    </location>
</feature>
<feature type="lipid moiety-binding region" description="N-palmitoyl cysteine" evidence="2">
    <location>
        <position position="16"/>
    </location>
</feature>
<feature type="lipid moiety-binding region" description="S-diacylglycerol cysteine" evidence="2">
    <location>
        <position position="16"/>
    </location>
</feature>
<feature type="strand" evidence="3">
    <location>
        <begin position="40"/>
        <end position="43"/>
    </location>
</feature>
<feature type="strand" evidence="3">
    <location>
        <begin position="46"/>
        <end position="58"/>
    </location>
</feature>
<feature type="strand" evidence="3">
    <location>
        <begin position="65"/>
        <end position="78"/>
    </location>
</feature>
<feature type="strand" evidence="3">
    <location>
        <begin position="81"/>
        <end position="83"/>
    </location>
</feature>
<feature type="strand" evidence="3">
    <location>
        <begin position="88"/>
        <end position="98"/>
    </location>
</feature>
<feature type="turn" evidence="3">
    <location>
        <begin position="99"/>
        <end position="102"/>
    </location>
</feature>
<feature type="strand" evidence="3">
    <location>
        <begin position="103"/>
        <end position="115"/>
    </location>
</feature>
<feature type="strand" evidence="3">
    <location>
        <begin position="119"/>
        <end position="122"/>
    </location>
</feature>
<feature type="strand" evidence="3">
    <location>
        <begin position="130"/>
        <end position="133"/>
    </location>
</feature>
<feature type="strand" evidence="3">
    <location>
        <begin position="136"/>
        <end position="138"/>
    </location>
</feature>
<feature type="helix" evidence="3">
    <location>
        <begin position="139"/>
        <end position="151"/>
    </location>
</feature>
<name>HPE_HAEIN</name>
<comment type="function">
    <text evidence="1">Acts as a multifunctional adhesin involved in direct interactions with host epithelial cells and host proteins.</text>
</comment>
<comment type="subcellular location">
    <subcellularLocation>
        <location evidence="1">Cell outer membrane</location>
        <topology evidence="2">Lipid-anchor</topology>
    </subcellularLocation>
    <subcellularLocation>
        <location evidence="1">Cell surface</location>
    </subcellularLocation>
</comment>
<protein>
    <recommendedName>
        <fullName>Surface-adhesin protein E</fullName>
    </recommendedName>
</protein>
<accession>P43961</accession>
<keyword id="KW-0002">3D-structure</keyword>
<keyword id="KW-0998">Cell outer membrane</keyword>
<keyword id="KW-0449">Lipoprotein</keyword>
<keyword id="KW-0472">Membrane</keyword>
<keyword id="KW-0564">Palmitate</keyword>
<keyword id="KW-1185">Reference proteome</keyword>
<keyword id="KW-0732">Signal</keyword>
<keyword id="KW-0843">Virulence</keyword>